<sequence length="474" mass="53663">MTKKLHIKTWGCQMNEYDSSKMADLLDATHGYQLTDVAEEADVLLLNTCSIREKAQEKVFHQLGRWKLLKEKNPDLIIGVGGCVASQEGEHIRQRAHYVDIIFGPQTLHRLPEMINSVRGDRSPVVDISFPEIEKFDRLPEPRAEGPTAFVSIMEGCNKYCTYCVVPYTRGEEVSRPSDDILFEIAQLAAQGVREVNLLGQNVNAWRGENYDGTTGSFADLLRLVAAIDGIDRIRFTTSHPIEFTDDIIEVYRDTPELVSFLHLPVQSGSDRILNLMGRTHTALEYKAIIRKLRAARPDIQISSDFIVGFPGETTEDFEKTMKLIADVNFDMSYSFIFSARPGTPAADMVDDVPEEEKKQRLYILQERINQQAMAWSRRMLGTTQRILVEGTSRKSIMELSGRTENNRVVNFEGTPDMIGKFVDVEITDVYPNSLRGKVVRTEDEMGLRVAETPESVIARTRKENDLGVGYYQP</sequence>
<organism>
    <name type="scientific">Escherichia coli O17:K52:H18 (strain UMN026 / ExPEC)</name>
    <dbReference type="NCBI Taxonomy" id="585056"/>
    <lineage>
        <taxon>Bacteria</taxon>
        <taxon>Pseudomonadati</taxon>
        <taxon>Pseudomonadota</taxon>
        <taxon>Gammaproteobacteria</taxon>
        <taxon>Enterobacterales</taxon>
        <taxon>Enterobacteriaceae</taxon>
        <taxon>Escherichia</taxon>
    </lineage>
</organism>
<proteinExistence type="inferred from homology"/>
<dbReference type="EC" id="2.8.4.3" evidence="1"/>
<dbReference type="EMBL" id="CU928163">
    <property type="protein sequence ID" value="CAR11967.1"/>
    <property type="molecule type" value="Genomic_DNA"/>
</dbReference>
<dbReference type="RefSeq" id="WP_000162740.1">
    <property type="nucleotide sequence ID" value="NC_011751.1"/>
</dbReference>
<dbReference type="RefSeq" id="YP_002411513.1">
    <property type="nucleotide sequence ID" value="NC_011751.1"/>
</dbReference>
<dbReference type="SMR" id="B7N9R6"/>
<dbReference type="STRING" id="585056.ECUMN_0754"/>
<dbReference type="GeneID" id="86863171"/>
<dbReference type="KEGG" id="eum:ECUMN_0754"/>
<dbReference type="PATRIC" id="fig|585056.7.peg.955"/>
<dbReference type="HOGENOM" id="CLU_018697_2_0_6"/>
<dbReference type="Proteomes" id="UP000007097">
    <property type="component" value="Chromosome"/>
</dbReference>
<dbReference type="GO" id="GO:0005829">
    <property type="term" value="C:cytosol"/>
    <property type="evidence" value="ECO:0007669"/>
    <property type="project" value="TreeGrafter"/>
</dbReference>
<dbReference type="GO" id="GO:0051539">
    <property type="term" value="F:4 iron, 4 sulfur cluster binding"/>
    <property type="evidence" value="ECO:0007669"/>
    <property type="project" value="UniProtKB-UniRule"/>
</dbReference>
<dbReference type="GO" id="GO:0046872">
    <property type="term" value="F:metal ion binding"/>
    <property type="evidence" value="ECO:0007669"/>
    <property type="project" value="UniProtKB-KW"/>
</dbReference>
<dbReference type="GO" id="GO:0035597">
    <property type="term" value="F:N6-isopentenyladenosine methylthiotransferase activity"/>
    <property type="evidence" value="ECO:0007669"/>
    <property type="project" value="TreeGrafter"/>
</dbReference>
<dbReference type="CDD" id="cd01335">
    <property type="entry name" value="Radical_SAM"/>
    <property type="match status" value="1"/>
</dbReference>
<dbReference type="FunFam" id="3.40.50.12160:FF:000001">
    <property type="entry name" value="tRNA-2-methylthio-N(6)-dimethylallyladenosine synthase"/>
    <property type="match status" value="1"/>
</dbReference>
<dbReference type="FunFam" id="3.80.30.20:FF:000001">
    <property type="entry name" value="tRNA-2-methylthio-N(6)-dimethylallyladenosine synthase 2"/>
    <property type="match status" value="1"/>
</dbReference>
<dbReference type="Gene3D" id="3.40.50.12160">
    <property type="entry name" value="Methylthiotransferase, N-terminal domain"/>
    <property type="match status" value="1"/>
</dbReference>
<dbReference type="Gene3D" id="3.80.30.20">
    <property type="entry name" value="tm_1862 like domain"/>
    <property type="match status" value="1"/>
</dbReference>
<dbReference type="HAMAP" id="MF_01864">
    <property type="entry name" value="tRNA_metthiotr_MiaB"/>
    <property type="match status" value="1"/>
</dbReference>
<dbReference type="InterPro" id="IPR006638">
    <property type="entry name" value="Elp3/MiaA/NifB-like_rSAM"/>
</dbReference>
<dbReference type="InterPro" id="IPR005839">
    <property type="entry name" value="Methylthiotransferase"/>
</dbReference>
<dbReference type="InterPro" id="IPR020612">
    <property type="entry name" value="Methylthiotransferase_CS"/>
</dbReference>
<dbReference type="InterPro" id="IPR013848">
    <property type="entry name" value="Methylthiotransferase_N"/>
</dbReference>
<dbReference type="InterPro" id="IPR038135">
    <property type="entry name" value="Methylthiotransferase_N_sf"/>
</dbReference>
<dbReference type="InterPro" id="IPR006463">
    <property type="entry name" value="MiaB_methiolase"/>
</dbReference>
<dbReference type="InterPro" id="IPR007197">
    <property type="entry name" value="rSAM"/>
</dbReference>
<dbReference type="InterPro" id="IPR023404">
    <property type="entry name" value="rSAM_horseshoe"/>
</dbReference>
<dbReference type="InterPro" id="IPR002792">
    <property type="entry name" value="TRAM_dom"/>
</dbReference>
<dbReference type="NCBIfam" id="TIGR01574">
    <property type="entry name" value="miaB-methiolase"/>
    <property type="match status" value="1"/>
</dbReference>
<dbReference type="NCBIfam" id="TIGR00089">
    <property type="entry name" value="MiaB/RimO family radical SAM methylthiotransferase"/>
    <property type="match status" value="1"/>
</dbReference>
<dbReference type="PANTHER" id="PTHR43020">
    <property type="entry name" value="CDK5 REGULATORY SUBUNIT-ASSOCIATED PROTEIN 1"/>
    <property type="match status" value="1"/>
</dbReference>
<dbReference type="PANTHER" id="PTHR43020:SF2">
    <property type="entry name" value="MITOCHONDRIAL TRNA METHYLTHIOTRANSFERASE CDK5RAP1"/>
    <property type="match status" value="1"/>
</dbReference>
<dbReference type="Pfam" id="PF04055">
    <property type="entry name" value="Radical_SAM"/>
    <property type="match status" value="1"/>
</dbReference>
<dbReference type="Pfam" id="PF01938">
    <property type="entry name" value="TRAM"/>
    <property type="match status" value="1"/>
</dbReference>
<dbReference type="Pfam" id="PF00919">
    <property type="entry name" value="UPF0004"/>
    <property type="match status" value="1"/>
</dbReference>
<dbReference type="SFLD" id="SFLDF00273">
    <property type="entry name" value="(dimethylallyl)adenosine_tRNA"/>
    <property type="match status" value="1"/>
</dbReference>
<dbReference type="SFLD" id="SFLDG01082">
    <property type="entry name" value="B12-binding_domain_containing"/>
    <property type="match status" value="1"/>
</dbReference>
<dbReference type="SFLD" id="SFLDS00029">
    <property type="entry name" value="Radical_SAM"/>
    <property type="match status" value="1"/>
</dbReference>
<dbReference type="SMART" id="SM00729">
    <property type="entry name" value="Elp3"/>
    <property type="match status" value="1"/>
</dbReference>
<dbReference type="SUPFAM" id="SSF102114">
    <property type="entry name" value="Radical SAM enzymes"/>
    <property type="match status" value="1"/>
</dbReference>
<dbReference type="PROSITE" id="PS51449">
    <property type="entry name" value="MTTASE_N"/>
    <property type="match status" value="1"/>
</dbReference>
<dbReference type="PROSITE" id="PS01278">
    <property type="entry name" value="MTTASE_RADICAL"/>
    <property type="match status" value="1"/>
</dbReference>
<dbReference type="PROSITE" id="PS51918">
    <property type="entry name" value="RADICAL_SAM"/>
    <property type="match status" value="1"/>
</dbReference>
<dbReference type="PROSITE" id="PS50926">
    <property type="entry name" value="TRAM"/>
    <property type="match status" value="1"/>
</dbReference>
<reference key="1">
    <citation type="journal article" date="2009" name="PLoS Genet.">
        <title>Organised genome dynamics in the Escherichia coli species results in highly diverse adaptive paths.</title>
        <authorList>
            <person name="Touchon M."/>
            <person name="Hoede C."/>
            <person name="Tenaillon O."/>
            <person name="Barbe V."/>
            <person name="Baeriswyl S."/>
            <person name="Bidet P."/>
            <person name="Bingen E."/>
            <person name="Bonacorsi S."/>
            <person name="Bouchier C."/>
            <person name="Bouvet O."/>
            <person name="Calteau A."/>
            <person name="Chiapello H."/>
            <person name="Clermont O."/>
            <person name="Cruveiller S."/>
            <person name="Danchin A."/>
            <person name="Diard M."/>
            <person name="Dossat C."/>
            <person name="Karoui M.E."/>
            <person name="Frapy E."/>
            <person name="Garry L."/>
            <person name="Ghigo J.M."/>
            <person name="Gilles A.M."/>
            <person name="Johnson J."/>
            <person name="Le Bouguenec C."/>
            <person name="Lescat M."/>
            <person name="Mangenot S."/>
            <person name="Martinez-Jehanne V."/>
            <person name="Matic I."/>
            <person name="Nassif X."/>
            <person name="Oztas S."/>
            <person name="Petit M.A."/>
            <person name="Pichon C."/>
            <person name="Rouy Z."/>
            <person name="Ruf C.S."/>
            <person name="Schneider D."/>
            <person name="Tourret J."/>
            <person name="Vacherie B."/>
            <person name="Vallenet D."/>
            <person name="Medigue C."/>
            <person name="Rocha E.P.C."/>
            <person name="Denamur E."/>
        </authorList>
    </citation>
    <scope>NUCLEOTIDE SEQUENCE [LARGE SCALE GENOMIC DNA]</scope>
    <source>
        <strain>UMN026 / ExPEC</strain>
    </source>
</reference>
<protein>
    <recommendedName>
        <fullName evidence="1">tRNA-2-methylthio-N(6)-dimethylallyladenosine synthase</fullName>
        <ecNumber evidence="1">2.8.4.3</ecNumber>
    </recommendedName>
    <alternativeName>
        <fullName evidence="1">(Dimethylallyl)adenosine tRNA methylthiotransferase MiaB</fullName>
    </alternativeName>
    <alternativeName>
        <fullName evidence="1">tRNA-i(6)A37 methylthiotransferase</fullName>
    </alternativeName>
</protein>
<gene>
    <name evidence="1" type="primary">miaB</name>
    <name type="ordered locus">ECUMN_0754</name>
</gene>
<keyword id="KW-0004">4Fe-4S</keyword>
<keyword id="KW-0963">Cytoplasm</keyword>
<keyword id="KW-0408">Iron</keyword>
<keyword id="KW-0411">Iron-sulfur</keyword>
<keyword id="KW-0479">Metal-binding</keyword>
<keyword id="KW-0949">S-adenosyl-L-methionine</keyword>
<keyword id="KW-0808">Transferase</keyword>
<keyword id="KW-0819">tRNA processing</keyword>
<name>MIAB_ECOLU</name>
<accession>B7N9R6</accession>
<comment type="function">
    <text evidence="1">Catalyzes the methylthiolation of N6-(dimethylallyl)adenosine (i(6)A), leading to the formation of 2-methylthio-N6-(dimethylallyl)adenosine (ms(2)i(6)A) at position 37 in tRNAs that read codons beginning with uridine.</text>
</comment>
<comment type="catalytic activity">
    <reaction evidence="1">
        <text>N(6)-dimethylallyladenosine(37) in tRNA + (sulfur carrier)-SH + AH2 + 2 S-adenosyl-L-methionine = 2-methylsulfanyl-N(6)-dimethylallyladenosine(37) in tRNA + (sulfur carrier)-H + 5'-deoxyadenosine + L-methionine + A + S-adenosyl-L-homocysteine + 2 H(+)</text>
        <dbReference type="Rhea" id="RHEA:37067"/>
        <dbReference type="Rhea" id="RHEA-COMP:10375"/>
        <dbReference type="Rhea" id="RHEA-COMP:10376"/>
        <dbReference type="Rhea" id="RHEA-COMP:14737"/>
        <dbReference type="Rhea" id="RHEA-COMP:14739"/>
        <dbReference type="ChEBI" id="CHEBI:13193"/>
        <dbReference type="ChEBI" id="CHEBI:15378"/>
        <dbReference type="ChEBI" id="CHEBI:17319"/>
        <dbReference type="ChEBI" id="CHEBI:17499"/>
        <dbReference type="ChEBI" id="CHEBI:29917"/>
        <dbReference type="ChEBI" id="CHEBI:57844"/>
        <dbReference type="ChEBI" id="CHEBI:57856"/>
        <dbReference type="ChEBI" id="CHEBI:59789"/>
        <dbReference type="ChEBI" id="CHEBI:64428"/>
        <dbReference type="ChEBI" id="CHEBI:74415"/>
        <dbReference type="ChEBI" id="CHEBI:74417"/>
        <dbReference type="EC" id="2.8.4.3"/>
    </reaction>
</comment>
<comment type="cofactor">
    <cofactor evidence="1">
        <name>[4Fe-4S] cluster</name>
        <dbReference type="ChEBI" id="CHEBI:49883"/>
    </cofactor>
    <text evidence="1">Binds 2 [4Fe-4S] clusters. One cluster is coordinated with 3 cysteines and an exchangeable S-adenosyl-L-methionine.</text>
</comment>
<comment type="subunit">
    <text evidence="1">Monomer.</text>
</comment>
<comment type="subcellular location">
    <subcellularLocation>
        <location evidence="1">Cytoplasm</location>
    </subcellularLocation>
</comment>
<comment type="similarity">
    <text evidence="1">Belongs to the methylthiotransferase family. MiaB subfamily.</text>
</comment>
<feature type="chain" id="PRO_0000374289" description="tRNA-2-methylthio-N(6)-dimethylallyladenosine synthase">
    <location>
        <begin position="1"/>
        <end position="474"/>
    </location>
</feature>
<feature type="domain" description="MTTase N-terminal" evidence="1">
    <location>
        <begin position="3"/>
        <end position="120"/>
    </location>
</feature>
<feature type="domain" description="Radical SAM core" evidence="2">
    <location>
        <begin position="143"/>
        <end position="375"/>
    </location>
</feature>
<feature type="domain" description="TRAM" evidence="1">
    <location>
        <begin position="378"/>
        <end position="441"/>
    </location>
</feature>
<feature type="binding site" evidence="1">
    <location>
        <position position="12"/>
    </location>
    <ligand>
        <name>[4Fe-4S] cluster</name>
        <dbReference type="ChEBI" id="CHEBI:49883"/>
        <label>1</label>
    </ligand>
</feature>
<feature type="binding site" evidence="1">
    <location>
        <position position="49"/>
    </location>
    <ligand>
        <name>[4Fe-4S] cluster</name>
        <dbReference type="ChEBI" id="CHEBI:49883"/>
        <label>1</label>
    </ligand>
</feature>
<feature type="binding site" evidence="1">
    <location>
        <position position="83"/>
    </location>
    <ligand>
        <name>[4Fe-4S] cluster</name>
        <dbReference type="ChEBI" id="CHEBI:49883"/>
        <label>1</label>
    </ligand>
</feature>
<feature type="binding site" evidence="1">
    <location>
        <position position="157"/>
    </location>
    <ligand>
        <name>[4Fe-4S] cluster</name>
        <dbReference type="ChEBI" id="CHEBI:49883"/>
        <label>2</label>
        <note>4Fe-4S-S-AdoMet</note>
    </ligand>
</feature>
<feature type="binding site" evidence="1">
    <location>
        <position position="161"/>
    </location>
    <ligand>
        <name>[4Fe-4S] cluster</name>
        <dbReference type="ChEBI" id="CHEBI:49883"/>
        <label>2</label>
        <note>4Fe-4S-S-AdoMet</note>
    </ligand>
</feature>
<feature type="binding site" evidence="1">
    <location>
        <position position="164"/>
    </location>
    <ligand>
        <name>[4Fe-4S] cluster</name>
        <dbReference type="ChEBI" id="CHEBI:49883"/>
        <label>2</label>
        <note>4Fe-4S-S-AdoMet</note>
    </ligand>
</feature>
<evidence type="ECO:0000255" key="1">
    <source>
        <dbReference type="HAMAP-Rule" id="MF_01864"/>
    </source>
</evidence>
<evidence type="ECO:0000255" key="2">
    <source>
        <dbReference type="PROSITE-ProRule" id="PRU01266"/>
    </source>
</evidence>